<evidence type="ECO:0000255" key="1">
    <source>
        <dbReference type="HAMAP-Rule" id="MF_00051"/>
    </source>
</evidence>
<name>GLYA_SHEAM</name>
<comment type="function">
    <text evidence="1">Catalyzes the reversible interconversion of serine and glycine with tetrahydrofolate (THF) serving as the one-carbon carrier. This reaction serves as the major source of one-carbon groups required for the biosynthesis of purines, thymidylate, methionine, and other important biomolecules. Also exhibits THF-independent aldolase activity toward beta-hydroxyamino acids, producing glycine and aldehydes, via a retro-aldol mechanism.</text>
</comment>
<comment type="catalytic activity">
    <reaction evidence="1">
        <text>(6R)-5,10-methylene-5,6,7,8-tetrahydrofolate + glycine + H2O = (6S)-5,6,7,8-tetrahydrofolate + L-serine</text>
        <dbReference type="Rhea" id="RHEA:15481"/>
        <dbReference type="ChEBI" id="CHEBI:15377"/>
        <dbReference type="ChEBI" id="CHEBI:15636"/>
        <dbReference type="ChEBI" id="CHEBI:33384"/>
        <dbReference type="ChEBI" id="CHEBI:57305"/>
        <dbReference type="ChEBI" id="CHEBI:57453"/>
        <dbReference type="EC" id="2.1.2.1"/>
    </reaction>
</comment>
<comment type="cofactor">
    <cofactor evidence="1">
        <name>pyridoxal 5'-phosphate</name>
        <dbReference type="ChEBI" id="CHEBI:597326"/>
    </cofactor>
</comment>
<comment type="pathway">
    <text evidence="1">One-carbon metabolism; tetrahydrofolate interconversion.</text>
</comment>
<comment type="pathway">
    <text evidence="1">Amino-acid biosynthesis; glycine biosynthesis; glycine from L-serine: step 1/1.</text>
</comment>
<comment type="subunit">
    <text evidence="1">Homodimer.</text>
</comment>
<comment type="subcellular location">
    <subcellularLocation>
        <location evidence="1">Cytoplasm</location>
    </subcellularLocation>
</comment>
<comment type="similarity">
    <text evidence="1">Belongs to the SHMT family.</text>
</comment>
<reference key="1">
    <citation type="submission" date="2006-12" db="EMBL/GenBank/DDBJ databases">
        <title>Complete sequence of Shewanella amazonensis SB2B.</title>
        <authorList>
            <consortium name="US DOE Joint Genome Institute"/>
            <person name="Copeland A."/>
            <person name="Lucas S."/>
            <person name="Lapidus A."/>
            <person name="Barry K."/>
            <person name="Detter J.C."/>
            <person name="Glavina del Rio T."/>
            <person name="Hammon N."/>
            <person name="Israni S."/>
            <person name="Dalin E."/>
            <person name="Tice H."/>
            <person name="Pitluck S."/>
            <person name="Munk A.C."/>
            <person name="Brettin T."/>
            <person name="Bruce D."/>
            <person name="Han C."/>
            <person name="Tapia R."/>
            <person name="Gilna P."/>
            <person name="Schmutz J."/>
            <person name="Larimer F."/>
            <person name="Land M."/>
            <person name="Hauser L."/>
            <person name="Kyrpides N."/>
            <person name="Mikhailova N."/>
            <person name="Fredrickson J."/>
            <person name="Richardson P."/>
        </authorList>
    </citation>
    <scope>NUCLEOTIDE SEQUENCE [LARGE SCALE GENOMIC DNA]</scope>
    <source>
        <strain>ATCC BAA-1098 / SB2B</strain>
    </source>
</reference>
<accession>A1S4B5</accession>
<keyword id="KW-0028">Amino-acid biosynthesis</keyword>
<keyword id="KW-0963">Cytoplasm</keyword>
<keyword id="KW-0554">One-carbon metabolism</keyword>
<keyword id="KW-0663">Pyridoxal phosphate</keyword>
<keyword id="KW-1185">Reference proteome</keyword>
<keyword id="KW-0808">Transferase</keyword>
<proteinExistence type="inferred from homology"/>
<feature type="chain" id="PRO_1000006312" description="Serine hydroxymethyltransferase">
    <location>
        <begin position="1"/>
        <end position="417"/>
    </location>
</feature>
<feature type="binding site" evidence="1">
    <location>
        <position position="121"/>
    </location>
    <ligand>
        <name>(6S)-5,6,7,8-tetrahydrofolate</name>
        <dbReference type="ChEBI" id="CHEBI:57453"/>
    </ligand>
</feature>
<feature type="binding site" evidence="1">
    <location>
        <begin position="125"/>
        <end position="127"/>
    </location>
    <ligand>
        <name>(6S)-5,6,7,8-tetrahydrofolate</name>
        <dbReference type="ChEBI" id="CHEBI:57453"/>
    </ligand>
</feature>
<feature type="binding site" evidence="1">
    <location>
        <begin position="355"/>
        <end position="357"/>
    </location>
    <ligand>
        <name>(6S)-5,6,7,8-tetrahydrofolate</name>
        <dbReference type="ChEBI" id="CHEBI:57453"/>
    </ligand>
</feature>
<feature type="site" description="Plays an important role in substrate specificity" evidence="1">
    <location>
        <position position="228"/>
    </location>
</feature>
<feature type="modified residue" description="N6-(pyridoxal phosphate)lysine" evidence="1">
    <location>
        <position position="229"/>
    </location>
</feature>
<dbReference type="EC" id="2.1.2.1" evidence="1"/>
<dbReference type="EMBL" id="CP000507">
    <property type="protein sequence ID" value="ABL99221.1"/>
    <property type="molecule type" value="Genomic_DNA"/>
</dbReference>
<dbReference type="RefSeq" id="WP_011759130.1">
    <property type="nucleotide sequence ID" value="NC_008700.1"/>
</dbReference>
<dbReference type="SMR" id="A1S4B5"/>
<dbReference type="STRING" id="326297.Sama_1014"/>
<dbReference type="KEGG" id="saz:Sama_1014"/>
<dbReference type="eggNOG" id="COG0112">
    <property type="taxonomic scope" value="Bacteria"/>
</dbReference>
<dbReference type="HOGENOM" id="CLU_022477_2_1_6"/>
<dbReference type="OrthoDB" id="9803846at2"/>
<dbReference type="UniPathway" id="UPA00193"/>
<dbReference type="UniPathway" id="UPA00288">
    <property type="reaction ID" value="UER01023"/>
</dbReference>
<dbReference type="Proteomes" id="UP000009175">
    <property type="component" value="Chromosome"/>
</dbReference>
<dbReference type="GO" id="GO:0005829">
    <property type="term" value="C:cytosol"/>
    <property type="evidence" value="ECO:0007669"/>
    <property type="project" value="TreeGrafter"/>
</dbReference>
<dbReference type="GO" id="GO:0004372">
    <property type="term" value="F:glycine hydroxymethyltransferase activity"/>
    <property type="evidence" value="ECO:0007669"/>
    <property type="project" value="UniProtKB-UniRule"/>
</dbReference>
<dbReference type="GO" id="GO:0030170">
    <property type="term" value="F:pyridoxal phosphate binding"/>
    <property type="evidence" value="ECO:0007669"/>
    <property type="project" value="UniProtKB-UniRule"/>
</dbReference>
<dbReference type="GO" id="GO:0019264">
    <property type="term" value="P:glycine biosynthetic process from serine"/>
    <property type="evidence" value="ECO:0007669"/>
    <property type="project" value="UniProtKB-UniRule"/>
</dbReference>
<dbReference type="GO" id="GO:0035999">
    <property type="term" value="P:tetrahydrofolate interconversion"/>
    <property type="evidence" value="ECO:0007669"/>
    <property type="project" value="UniProtKB-UniRule"/>
</dbReference>
<dbReference type="CDD" id="cd00378">
    <property type="entry name" value="SHMT"/>
    <property type="match status" value="1"/>
</dbReference>
<dbReference type="FunFam" id="3.40.640.10:FF:000001">
    <property type="entry name" value="Serine hydroxymethyltransferase"/>
    <property type="match status" value="1"/>
</dbReference>
<dbReference type="FunFam" id="3.90.1150.10:FF:000003">
    <property type="entry name" value="Serine hydroxymethyltransferase"/>
    <property type="match status" value="1"/>
</dbReference>
<dbReference type="Gene3D" id="3.90.1150.10">
    <property type="entry name" value="Aspartate Aminotransferase, domain 1"/>
    <property type="match status" value="1"/>
</dbReference>
<dbReference type="Gene3D" id="3.40.640.10">
    <property type="entry name" value="Type I PLP-dependent aspartate aminotransferase-like (Major domain)"/>
    <property type="match status" value="1"/>
</dbReference>
<dbReference type="HAMAP" id="MF_00051">
    <property type="entry name" value="SHMT"/>
    <property type="match status" value="1"/>
</dbReference>
<dbReference type="InterPro" id="IPR015424">
    <property type="entry name" value="PyrdxlP-dep_Trfase"/>
</dbReference>
<dbReference type="InterPro" id="IPR015421">
    <property type="entry name" value="PyrdxlP-dep_Trfase_major"/>
</dbReference>
<dbReference type="InterPro" id="IPR015422">
    <property type="entry name" value="PyrdxlP-dep_Trfase_small"/>
</dbReference>
<dbReference type="InterPro" id="IPR001085">
    <property type="entry name" value="Ser_HO-MeTrfase"/>
</dbReference>
<dbReference type="InterPro" id="IPR049943">
    <property type="entry name" value="Ser_HO-MeTrfase-like"/>
</dbReference>
<dbReference type="InterPro" id="IPR019798">
    <property type="entry name" value="Ser_HO-MeTrfase_PLP_BS"/>
</dbReference>
<dbReference type="InterPro" id="IPR039429">
    <property type="entry name" value="SHMT-like_dom"/>
</dbReference>
<dbReference type="NCBIfam" id="NF000586">
    <property type="entry name" value="PRK00011.1"/>
    <property type="match status" value="1"/>
</dbReference>
<dbReference type="PANTHER" id="PTHR11680">
    <property type="entry name" value="SERINE HYDROXYMETHYLTRANSFERASE"/>
    <property type="match status" value="1"/>
</dbReference>
<dbReference type="PANTHER" id="PTHR11680:SF50">
    <property type="entry name" value="SERINE HYDROXYMETHYLTRANSFERASE"/>
    <property type="match status" value="1"/>
</dbReference>
<dbReference type="Pfam" id="PF00464">
    <property type="entry name" value="SHMT"/>
    <property type="match status" value="1"/>
</dbReference>
<dbReference type="PIRSF" id="PIRSF000412">
    <property type="entry name" value="SHMT"/>
    <property type="match status" value="1"/>
</dbReference>
<dbReference type="SUPFAM" id="SSF53383">
    <property type="entry name" value="PLP-dependent transferases"/>
    <property type="match status" value="1"/>
</dbReference>
<dbReference type="PROSITE" id="PS00096">
    <property type="entry name" value="SHMT"/>
    <property type="match status" value="1"/>
</dbReference>
<organism>
    <name type="scientific">Shewanella amazonensis (strain ATCC BAA-1098 / SB2B)</name>
    <dbReference type="NCBI Taxonomy" id="326297"/>
    <lineage>
        <taxon>Bacteria</taxon>
        <taxon>Pseudomonadati</taxon>
        <taxon>Pseudomonadota</taxon>
        <taxon>Gammaproteobacteria</taxon>
        <taxon>Alteromonadales</taxon>
        <taxon>Shewanellaceae</taxon>
        <taxon>Shewanella</taxon>
    </lineage>
</organism>
<protein>
    <recommendedName>
        <fullName evidence="1">Serine hydroxymethyltransferase</fullName>
        <shortName evidence="1">SHMT</shortName>
        <shortName evidence="1">Serine methylase</shortName>
        <ecNumber evidence="1">2.1.2.1</ecNumber>
    </recommendedName>
</protein>
<sequence length="417" mass="45430">MLKKTMNIADYDPELFKAIEDETLRQEEHIELIASENYTSPRVMQAQGSQLTNKYAEGYPGKRYYGGCEYVDIVETLAIERAKELFGATFANVQPHSGSQANSAVYMTLLQPGDTVLGMNLAHGGHLTHGSPVNFSGKLYNIIPYGIDETGKIDYDEMERLAVEHKPKMMIGGFSAYSGIVDWARMREIADKIGAYLFVDMAHVAGLVAAGVYPNPVPHAHVVTSTTHKTLAGPRGGIILSAANDEDLYKKLNSAVFPGGQGGPLMHVIAGKAVAFKEALEPEFKVYQQQVVTNAKAMVEVFLERGYKIVSGGTDNHLMLVDLIGRDLTGKEADAALGAANITVNKNSVPNDPRSPFITSGIRIGTPAITRRGFKEAEARELTHWICDVLDNAKDESVIARVKGQVLELCARFPVYG</sequence>
<gene>
    <name evidence="1" type="primary">glyA</name>
    <name type="ordered locus">Sama_1014</name>
</gene>